<gene>
    <name type="primary">CXCL10</name>
</gene>
<comment type="function">
    <text evidence="1">Chemotactic for monocytes and T-lymphocytes. Binds to CXCR3 (By similarity).</text>
</comment>
<comment type="subcellular location">
    <subcellularLocation>
        <location evidence="1">Secreted</location>
    </subcellularLocation>
</comment>
<comment type="similarity">
    <text evidence="2">Belongs to the intercrine alpha (chemokine CxC) family.</text>
</comment>
<proteinExistence type="inferred from homology"/>
<keyword id="KW-0145">Chemotaxis</keyword>
<keyword id="KW-0164">Citrullination</keyword>
<keyword id="KW-0202">Cytokine</keyword>
<keyword id="KW-1015">Disulfide bond</keyword>
<keyword id="KW-0395">Inflammatory response</keyword>
<keyword id="KW-1185">Reference proteome</keyword>
<keyword id="KW-0964">Secreted</keyword>
<keyword id="KW-0732">Signal</keyword>
<dbReference type="EMBL" id="AY206691">
    <property type="protein sequence ID" value="AAO52732.1"/>
    <property type="molecule type" value="mRNA"/>
</dbReference>
<dbReference type="RefSeq" id="NP_001295949.1">
    <property type="nucleotide sequence ID" value="NM_001309020.1"/>
</dbReference>
<dbReference type="SMR" id="Q865F5"/>
<dbReference type="STRING" id="9545.ENSMNEP00000046238"/>
<dbReference type="GeneID" id="105477263"/>
<dbReference type="KEGG" id="mni:105477263"/>
<dbReference type="CTD" id="3627"/>
<dbReference type="OrthoDB" id="4284at314294"/>
<dbReference type="Proteomes" id="UP000233120">
    <property type="component" value="Unassembled WGS sequence"/>
</dbReference>
<dbReference type="GO" id="GO:0005615">
    <property type="term" value="C:extracellular space"/>
    <property type="evidence" value="ECO:0007669"/>
    <property type="project" value="UniProtKB-KW"/>
</dbReference>
<dbReference type="GO" id="GO:0008009">
    <property type="term" value="F:chemokine activity"/>
    <property type="evidence" value="ECO:0000250"/>
    <property type="project" value="UniProtKB"/>
</dbReference>
<dbReference type="GO" id="GO:0048248">
    <property type="term" value="F:CXCR3 chemokine receptor binding"/>
    <property type="evidence" value="ECO:0000250"/>
    <property type="project" value="UniProtKB"/>
</dbReference>
<dbReference type="GO" id="GO:0007189">
    <property type="term" value="P:adenylate cyclase-activating G protein-coupled receptor signaling pathway"/>
    <property type="evidence" value="ECO:0000250"/>
    <property type="project" value="UniProtKB"/>
</dbReference>
<dbReference type="GO" id="GO:0006935">
    <property type="term" value="P:chemotaxis"/>
    <property type="evidence" value="ECO:0000250"/>
    <property type="project" value="UniProtKB"/>
</dbReference>
<dbReference type="GO" id="GO:0007186">
    <property type="term" value="P:G protein-coupled receptor signaling pathway"/>
    <property type="evidence" value="ECO:0000250"/>
    <property type="project" value="UniProtKB"/>
</dbReference>
<dbReference type="GO" id="GO:0006955">
    <property type="term" value="P:immune response"/>
    <property type="evidence" value="ECO:0007669"/>
    <property type="project" value="InterPro"/>
</dbReference>
<dbReference type="GO" id="GO:0006954">
    <property type="term" value="P:inflammatory response"/>
    <property type="evidence" value="ECO:0007669"/>
    <property type="project" value="UniProtKB-KW"/>
</dbReference>
<dbReference type="GO" id="GO:0051281">
    <property type="term" value="P:positive regulation of release of sequestered calcium ion into cytosol"/>
    <property type="evidence" value="ECO:0000250"/>
    <property type="project" value="UniProtKB"/>
</dbReference>
<dbReference type="GO" id="GO:0042127">
    <property type="term" value="P:regulation of cell population proliferation"/>
    <property type="evidence" value="ECO:0000250"/>
    <property type="project" value="UniProtKB"/>
</dbReference>
<dbReference type="CDD" id="cd00273">
    <property type="entry name" value="Chemokine_CXC"/>
    <property type="match status" value="1"/>
</dbReference>
<dbReference type="FunFam" id="2.40.50.40:FF:000004">
    <property type="entry name" value="C-X-C motif chemokine"/>
    <property type="match status" value="1"/>
</dbReference>
<dbReference type="Gene3D" id="2.40.50.40">
    <property type="match status" value="1"/>
</dbReference>
<dbReference type="InterPro" id="IPR039809">
    <property type="entry name" value="Chemokine_b/g/d"/>
</dbReference>
<dbReference type="InterPro" id="IPR001089">
    <property type="entry name" value="Chemokine_CXC"/>
</dbReference>
<dbReference type="InterPro" id="IPR018048">
    <property type="entry name" value="Chemokine_CXC_CS"/>
</dbReference>
<dbReference type="InterPro" id="IPR001811">
    <property type="entry name" value="Chemokine_IL8-like_dom"/>
</dbReference>
<dbReference type="InterPro" id="IPR033899">
    <property type="entry name" value="CXC_Chemokine_domain"/>
</dbReference>
<dbReference type="InterPro" id="IPR036048">
    <property type="entry name" value="Interleukin_8-like_sf"/>
</dbReference>
<dbReference type="PANTHER" id="PTHR12015:SF188">
    <property type="entry name" value="C-X-C MOTIF CHEMOKINE 10"/>
    <property type="match status" value="1"/>
</dbReference>
<dbReference type="PANTHER" id="PTHR12015">
    <property type="entry name" value="SMALL INDUCIBLE CYTOKINE A"/>
    <property type="match status" value="1"/>
</dbReference>
<dbReference type="Pfam" id="PF00048">
    <property type="entry name" value="IL8"/>
    <property type="match status" value="1"/>
</dbReference>
<dbReference type="PRINTS" id="PR00437">
    <property type="entry name" value="SMALLCYTKCXC"/>
</dbReference>
<dbReference type="SMART" id="SM00199">
    <property type="entry name" value="SCY"/>
    <property type="match status" value="1"/>
</dbReference>
<dbReference type="SUPFAM" id="SSF54117">
    <property type="entry name" value="Interleukin 8-like chemokines"/>
    <property type="match status" value="1"/>
</dbReference>
<dbReference type="PROSITE" id="PS00471">
    <property type="entry name" value="SMALL_CYTOKINES_CXC"/>
    <property type="match status" value="1"/>
</dbReference>
<feature type="signal peptide" evidence="1">
    <location>
        <begin position="1"/>
        <end position="21"/>
    </location>
</feature>
<feature type="chain" id="PRO_0000274966" description="C-X-C motif chemokine 10">
    <location>
        <begin position="22"/>
        <end position="98"/>
    </location>
</feature>
<feature type="modified residue" description="Citrulline" evidence="1">
    <location>
        <position position="26"/>
    </location>
</feature>
<feature type="disulfide bond" evidence="1">
    <location>
        <begin position="30"/>
        <end position="57"/>
    </location>
</feature>
<feature type="disulfide bond" evidence="1">
    <location>
        <begin position="32"/>
        <end position="74"/>
    </location>
</feature>
<organism>
    <name type="scientific">Macaca nemestrina</name>
    <name type="common">Pig-tailed macaque</name>
    <dbReference type="NCBI Taxonomy" id="9545"/>
    <lineage>
        <taxon>Eukaryota</taxon>
        <taxon>Metazoa</taxon>
        <taxon>Chordata</taxon>
        <taxon>Craniata</taxon>
        <taxon>Vertebrata</taxon>
        <taxon>Euteleostomi</taxon>
        <taxon>Mammalia</taxon>
        <taxon>Eutheria</taxon>
        <taxon>Euarchontoglires</taxon>
        <taxon>Primates</taxon>
        <taxon>Haplorrhini</taxon>
        <taxon>Catarrhini</taxon>
        <taxon>Cercopithecidae</taxon>
        <taxon>Cercopithecinae</taxon>
        <taxon>Macaca</taxon>
    </lineage>
</organism>
<sequence>MNQTAILICCLVFLTLSGIQGIPLSRTVRCTCISISNQPVNPRSLEKLEIIPPSQFCPHVEIIATMKKKGEKRCLNPESKAIKNLLKAVSEKKSKRPP</sequence>
<evidence type="ECO:0000250" key="1"/>
<evidence type="ECO:0000305" key="2"/>
<name>CXL10_MACNE</name>
<protein>
    <recommendedName>
        <fullName>C-X-C motif chemokine 10</fullName>
    </recommendedName>
    <alternativeName>
        <fullName>10 kDa interferon gamma-induced protein</fullName>
        <shortName>Gamma-IP10</shortName>
        <shortName>IP-10</shortName>
    </alternativeName>
    <alternativeName>
        <fullName>Small-inducible cytokine B10</fullName>
    </alternativeName>
</protein>
<reference key="1">
    <citation type="submission" date="2002-12" db="EMBL/GenBank/DDBJ databases">
        <title>Macaca nemestrina interferon gamma-induced protein of 10 kDa (IP-10) (CXC chemokine).</title>
        <authorList>
            <person name="Coleman G.D."/>
            <person name="Clements J.E."/>
            <person name="Zink M.C."/>
        </authorList>
    </citation>
    <scope>NUCLEOTIDE SEQUENCE [MRNA]</scope>
</reference>
<accession>Q865F5</accession>